<keyword id="KW-0903">Direct protein sequencing</keyword>
<keyword id="KW-0496">Mitochondrion</keyword>
<keyword id="KW-1185">Reference proteome</keyword>
<keyword id="KW-0687">Ribonucleoprotein</keyword>
<keyword id="KW-0689">Ribosomal protein</keyword>
<keyword id="KW-0809">Transit peptide</keyword>
<protein>
    <recommendedName>
        <fullName evidence="3">Large ribosomal subunit protein bL20m</fullName>
    </recommendedName>
    <alternativeName>
        <fullName>39S ribosomal protein L20, mitochondrial</fullName>
        <shortName>L20mt</shortName>
        <shortName>MRP-L20</shortName>
    </alternativeName>
</protein>
<evidence type="ECO:0000250" key="1">
    <source>
        <dbReference type="UniProtKB" id="Q2TBR2"/>
    </source>
</evidence>
<evidence type="ECO:0000250" key="2">
    <source>
        <dbReference type="UniProtKB" id="Q9BYC9"/>
    </source>
</evidence>
<evidence type="ECO:0000305" key="3"/>
<name>RM20_MOUSE</name>
<organism>
    <name type="scientific">Mus musculus</name>
    <name type="common">Mouse</name>
    <dbReference type="NCBI Taxonomy" id="10090"/>
    <lineage>
        <taxon>Eukaryota</taxon>
        <taxon>Metazoa</taxon>
        <taxon>Chordata</taxon>
        <taxon>Craniata</taxon>
        <taxon>Vertebrata</taxon>
        <taxon>Euteleostomi</taxon>
        <taxon>Mammalia</taxon>
        <taxon>Eutheria</taxon>
        <taxon>Euarchontoglires</taxon>
        <taxon>Glires</taxon>
        <taxon>Rodentia</taxon>
        <taxon>Myomorpha</taxon>
        <taxon>Muroidea</taxon>
        <taxon>Muridae</taxon>
        <taxon>Murinae</taxon>
        <taxon>Mus</taxon>
        <taxon>Mus</taxon>
    </lineage>
</organism>
<accession>Q9CQL4</accession>
<accession>Q9D5L3</accession>
<proteinExistence type="evidence at protein level"/>
<feature type="transit peptide" description="Mitochondrion" evidence="1">
    <location>
        <begin position="1"/>
        <end position="9"/>
    </location>
</feature>
<feature type="chain" id="PRO_0000248280" description="Large ribosomal subunit protein bL20m">
    <location>
        <begin position="10"/>
        <end position="149"/>
    </location>
</feature>
<feature type="sequence conflict" description="In Ref. 2; BAB29744." evidence="3" ref="2">
    <original>R</original>
    <variation>L</variation>
    <location>
        <position position="62"/>
    </location>
</feature>
<comment type="subunit">
    <text evidence="1 2">Component of the mitochondrial ribosome large subunit (39S) which comprises a 16S rRNA and about 50 distinct proteins (By similarity). Interacts with OXA1L (By similarity).</text>
</comment>
<comment type="subcellular location">
    <subcellularLocation>
        <location evidence="1">Mitochondrion</location>
    </subcellularLocation>
</comment>
<comment type="similarity">
    <text evidence="3">Belongs to the bacterial ribosomal protein bL20 family.</text>
</comment>
<gene>
    <name type="primary">Mrpl20</name>
</gene>
<dbReference type="EMBL" id="AB049645">
    <property type="protein sequence ID" value="BAB40850.1"/>
    <property type="molecule type" value="mRNA"/>
</dbReference>
<dbReference type="EMBL" id="AK004053">
    <property type="protein sequence ID" value="BAB23143.1"/>
    <property type="molecule type" value="mRNA"/>
</dbReference>
<dbReference type="EMBL" id="AK011341">
    <property type="protein sequence ID" value="BAB27555.1"/>
    <property type="molecule type" value="mRNA"/>
</dbReference>
<dbReference type="EMBL" id="AK015199">
    <property type="protein sequence ID" value="BAB29744.1"/>
    <property type="molecule type" value="mRNA"/>
</dbReference>
<dbReference type="EMBL" id="AK168665">
    <property type="protein sequence ID" value="BAE40517.1"/>
    <property type="molecule type" value="mRNA"/>
</dbReference>
<dbReference type="EMBL" id="BC039985">
    <property type="protein sequence ID" value="AAH39985.1"/>
    <property type="molecule type" value="mRNA"/>
</dbReference>
<dbReference type="CCDS" id="CCDS19041.1"/>
<dbReference type="RefSeq" id="NP_079846.1">
    <property type="nucleotide sequence ID" value="NM_025570.3"/>
</dbReference>
<dbReference type="RefSeq" id="XP_006539167.1">
    <property type="nucleotide sequence ID" value="XM_006539104.2"/>
</dbReference>
<dbReference type="RefSeq" id="XP_036020206.1">
    <property type="nucleotide sequence ID" value="XM_036164313.1"/>
</dbReference>
<dbReference type="SMR" id="Q9CQL4"/>
<dbReference type="BioGRID" id="211482">
    <property type="interactions" value="2"/>
</dbReference>
<dbReference type="ComplexPortal" id="CPX-5302">
    <property type="entry name" value="39S mitochondrial large ribosomal subunit"/>
</dbReference>
<dbReference type="FunCoup" id="Q9CQL4">
    <property type="interactions" value="1062"/>
</dbReference>
<dbReference type="STRING" id="10090.ENSMUSP00000030942"/>
<dbReference type="GlyGen" id="Q9CQL4">
    <property type="glycosylation" value="1 site"/>
</dbReference>
<dbReference type="iPTMnet" id="Q9CQL4"/>
<dbReference type="PhosphoSitePlus" id="Q9CQL4"/>
<dbReference type="jPOST" id="Q9CQL4"/>
<dbReference type="PaxDb" id="10090-ENSMUSP00000030942"/>
<dbReference type="PeptideAtlas" id="Q9CQL4"/>
<dbReference type="ProteomicsDB" id="300519"/>
<dbReference type="Pumba" id="Q9CQL4"/>
<dbReference type="Antibodypedia" id="51971">
    <property type="antibodies" value="82 antibodies from 19 providers"/>
</dbReference>
<dbReference type="DNASU" id="66448"/>
<dbReference type="Ensembl" id="ENSMUST00000030942.13">
    <property type="protein sequence ID" value="ENSMUSP00000030942.6"/>
    <property type="gene ID" value="ENSMUSG00000029066.13"/>
</dbReference>
<dbReference type="Ensembl" id="ENSMUST00000137487.9">
    <property type="protein sequence ID" value="ENSMUSP00000139122.2"/>
    <property type="gene ID" value="ENSMUSG00000029066.13"/>
</dbReference>
<dbReference type="GeneID" id="66448"/>
<dbReference type="KEGG" id="mmu:66448"/>
<dbReference type="UCSC" id="uc008weu.1">
    <property type="organism name" value="mouse"/>
</dbReference>
<dbReference type="AGR" id="MGI:2137221"/>
<dbReference type="CTD" id="55052"/>
<dbReference type="MGI" id="MGI:2137221">
    <property type="gene designation" value="Mrpl20"/>
</dbReference>
<dbReference type="VEuPathDB" id="HostDB:ENSMUSG00000029066"/>
<dbReference type="eggNOG" id="KOG4707">
    <property type="taxonomic scope" value="Eukaryota"/>
</dbReference>
<dbReference type="GeneTree" id="ENSGT00390000015823"/>
<dbReference type="HOGENOM" id="CLU_123265_1_1_1"/>
<dbReference type="InParanoid" id="Q9CQL4"/>
<dbReference type="OMA" id="GRRKNVW"/>
<dbReference type="OrthoDB" id="10251781at2759"/>
<dbReference type="PhylomeDB" id="Q9CQL4"/>
<dbReference type="TreeFam" id="TF324702"/>
<dbReference type="Reactome" id="R-MMU-5389840">
    <property type="pathway name" value="Mitochondrial translation elongation"/>
</dbReference>
<dbReference type="Reactome" id="R-MMU-5419276">
    <property type="pathway name" value="Mitochondrial translation termination"/>
</dbReference>
<dbReference type="BioGRID-ORCS" id="66448">
    <property type="hits" value="30 hits in 78 CRISPR screens"/>
</dbReference>
<dbReference type="ChiTaRS" id="Mrpl20">
    <property type="organism name" value="mouse"/>
</dbReference>
<dbReference type="PRO" id="PR:Q9CQL4"/>
<dbReference type="Proteomes" id="UP000000589">
    <property type="component" value="Chromosome 4"/>
</dbReference>
<dbReference type="RNAct" id="Q9CQL4">
    <property type="molecule type" value="protein"/>
</dbReference>
<dbReference type="Bgee" id="ENSMUSG00000029066">
    <property type="expression patterns" value="Expressed in gastrula and 301 other cell types or tissues"/>
</dbReference>
<dbReference type="ExpressionAtlas" id="Q9CQL4">
    <property type="expression patterns" value="baseline and differential"/>
</dbReference>
<dbReference type="GO" id="GO:0005743">
    <property type="term" value="C:mitochondrial inner membrane"/>
    <property type="evidence" value="ECO:0000303"/>
    <property type="project" value="ComplexPortal"/>
</dbReference>
<dbReference type="GO" id="GO:0005762">
    <property type="term" value="C:mitochondrial large ribosomal subunit"/>
    <property type="evidence" value="ECO:0000250"/>
    <property type="project" value="UniProtKB"/>
</dbReference>
<dbReference type="GO" id="GO:0005761">
    <property type="term" value="C:mitochondrial ribosome"/>
    <property type="evidence" value="ECO:0000250"/>
    <property type="project" value="UniProtKB"/>
</dbReference>
<dbReference type="GO" id="GO:0005739">
    <property type="term" value="C:mitochondrion"/>
    <property type="evidence" value="ECO:0007005"/>
    <property type="project" value="MGI"/>
</dbReference>
<dbReference type="GO" id="GO:0019843">
    <property type="term" value="F:rRNA binding"/>
    <property type="evidence" value="ECO:0007669"/>
    <property type="project" value="InterPro"/>
</dbReference>
<dbReference type="GO" id="GO:0003735">
    <property type="term" value="F:structural constituent of ribosome"/>
    <property type="evidence" value="ECO:0000266"/>
    <property type="project" value="MGI"/>
</dbReference>
<dbReference type="GO" id="GO:0032543">
    <property type="term" value="P:mitochondrial translation"/>
    <property type="evidence" value="ECO:0000303"/>
    <property type="project" value="ComplexPortal"/>
</dbReference>
<dbReference type="GO" id="GO:0006412">
    <property type="term" value="P:translation"/>
    <property type="evidence" value="ECO:0000266"/>
    <property type="project" value="MGI"/>
</dbReference>
<dbReference type="CDD" id="cd07026">
    <property type="entry name" value="Ribosomal_L20"/>
    <property type="match status" value="1"/>
</dbReference>
<dbReference type="FunFam" id="1.10.1900.20:FF:000001">
    <property type="entry name" value="50S ribosomal protein L20"/>
    <property type="match status" value="1"/>
</dbReference>
<dbReference type="Gene3D" id="6.10.160.10">
    <property type="match status" value="1"/>
</dbReference>
<dbReference type="Gene3D" id="1.10.1900.20">
    <property type="entry name" value="Ribosomal protein L20"/>
    <property type="match status" value="1"/>
</dbReference>
<dbReference type="InterPro" id="IPR005813">
    <property type="entry name" value="Ribosomal_bL20"/>
</dbReference>
<dbReference type="InterPro" id="IPR035566">
    <property type="entry name" value="Ribosomal_protein_bL20_C"/>
</dbReference>
<dbReference type="NCBIfam" id="TIGR01032">
    <property type="entry name" value="rplT_bact"/>
    <property type="match status" value="1"/>
</dbReference>
<dbReference type="PANTHER" id="PTHR10986">
    <property type="entry name" value="39S RIBOSOMAL PROTEIN L20"/>
    <property type="match status" value="1"/>
</dbReference>
<dbReference type="Pfam" id="PF00453">
    <property type="entry name" value="Ribosomal_L20"/>
    <property type="match status" value="1"/>
</dbReference>
<dbReference type="PRINTS" id="PR00062">
    <property type="entry name" value="RIBOSOMALL20"/>
</dbReference>
<dbReference type="SUPFAM" id="SSF74731">
    <property type="entry name" value="Ribosomal protein L20"/>
    <property type="match status" value="1"/>
</dbReference>
<sequence>MVFLTTRLWLRNRLTDRYWRVQEVLKHAQHFRGRKNRCYRLAVRAVTRAFVKCTKARRLKKRNLRTLWINRITAASQEHGLKYPAFIVNLIKCQVELNRKVLVDLAIYEPKTFKSLAALAKRRQQEGFAAALGDGKEPEGIFSRVVQYH</sequence>
<reference key="1">
    <citation type="journal article" date="2001" name="J. Biol. Chem.">
        <title>Structural compensation for the deficit of rRNA with proteins in the mammalian mitochondrial ribosome. Systematic analysis of protein components of the large ribosomal subunit from mammalian mitochondria.</title>
        <authorList>
            <person name="Suzuki T."/>
            <person name="Terasaki M."/>
            <person name="Takemoto-Hori C."/>
            <person name="Hanada T."/>
            <person name="Ueda T."/>
            <person name="Wada A."/>
            <person name="Watanabe K."/>
        </authorList>
    </citation>
    <scope>NUCLEOTIDE SEQUENCE [MRNA]</scope>
</reference>
<reference key="2">
    <citation type="journal article" date="2005" name="Science">
        <title>The transcriptional landscape of the mammalian genome.</title>
        <authorList>
            <person name="Carninci P."/>
            <person name="Kasukawa T."/>
            <person name="Katayama S."/>
            <person name="Gough J."/>
            <person name="Frith M.C."/>
            <person name="Maeda N."/>
            <person name="Oyama R."/>
            <person name="Ravasi T."/>
            <person name="Lenhard B."/>
            <person name="Wells C."/>
            <person name="Kodzius R."/>
            <person name="Shimokawa K."/>
            <person name="Bajic V.B."/>
            <person name="Brenner S.E."/>
            <person name="Batalov S."/>
            <person name="Forrest A.R."/>
            <person name="Zavolan M."/>
            <person name="Davis M.J."/>
            <person name="Wilming L.G."/>
            <person name="Aidinis V."/>
            <person name="Allen J.E."/>
            <person name="Ambesi-Impiombato A."/>
            <person name="Apweiler R."/>
            <person name="Aturaliya R.N."/>
            <person name="Bailey T.L."/>
            <person name="Bansal M."/>
            <person name="Baxter L."/>
            <person name="Beisel K.W."/>
            <person name="Bersano T."/>
            <person name="Bono H."/>
            <person name="Chalk A.M."/>
            <person name="Chiu K.P."/>
            <person name="Choudhary V."/>
            <person name="Christoffels A."/>
            <person name="Clutterbuck D.R."/>
            <person name="Crowe M.L."/>
            <person name="Dalla E."/>
            <person name="Dalrymple B.P."/>
            <person name="de Bono B."/>
            <person name="Della Gatta G."/>
            <person name="di Bernardo D."/>
            <person name="Down T."/>
            <person name="Engstrom P."/>
            <person name="Fagiolini M."/>
            <person name="Faulkner G."/>
            <person name="Fletcher C.F."/>
            <person name="Fukushima T."/>
            <person name="Furuno M."/>
            <person name="Futaki S."/>
            <person name="Gariboldi M."/>
            <person name="Georgii-Hemming P."/>
            <person name="Gingeras T.R."/>
            <person name="Gojobori T."/>
            <person name="Green R.E."/>
            <person name="Gustincich S."/>
            <person name="Harbers M."/>
            <person name="Hayashi Y."/>
            <person name="Hensch T.K."/>
            <person name="Hirokawa N."/>
            <person name="Hill D."/>
            <person name="Huminiecki L."/>
            <person name="Iacono M."/>
            <person name="Ikeo K."/>
            <person name="Iwama A."/>
            <person name="Ishikawa T."/>
            <person name="Jakt M."/>
            <person name="Kanapin A."/>
            <person name="Katoh M."/>
            <person name="Kawasawa Y."/>
            <person name="Kelso J."/>
            <person name="Kitamura H."/>
            <person name="Kitano H."/>
            <person name="Kollias G."/>
            <person name="Krishnan S.P."/>
            <person name="Kruger A."/>
            <person name="Kummerfeld S.K."/>
            <person name="Kurochkin I.V."/>
            <person name="Lareau L.F."/>
            <person name="Lazarevic D."/>
            <person name="Lipovich L."/>
            <person name="Liu J."/>
            <person name="Liuni S."/>
            <person name="McWilliam S."/>
            <person name="Madan Babu M."/>
            <person name="Madera M."/>
            <person name="Marchionni L."/>
            <person name="Matsuda H."/>
            <person name="Matsuzawa S."/>
            <person name="Miki H."/>
            <person name="Mignone F."/>
            <person name="Miyake S."/>
            <person name="Morris K."/>
            <person name="Mottagui-Tabar S."/>
            <person name="Mulder N."/>
            <person name="Nakano N."/>
            <person name="Nakauchi H."/>
            <person name="Ng P."/>
            <person name="Nilsson R."/>
            <person name="Nishiguchi S."/>
            <person name="Nishikawa S."/>
            <person name="Nori F."/>
            <person name="Ohara O."/>
            <person name="Okazaki Y."/>
            <person name="Orlando V."/>
            <person name="Pang K.C."/>
            <person name="Pavan W.J."/>
            <person name="Pavesi G."/>
            <person name="Pesole G."/>
            <person name="Petrovsky N."/>
            <person name="Piazza S."/>
            <person name="Reed J."/>
            <person name="Reid J.F."/>
            <person name="Ring B.Z."/>
            <person name="Ringwald M."/>
            <person name="Rost B."/>
            <person name="Ruan Y."/>
            <person name="Salzberg S.L."/>
            <person name="Sandelin A."/>
            <person name="Schneider C."/>
            <person name="Schoenbach C."/>
            <person name="Sekiguchi K."/>
            <person name="Semple C.A."/>
            <person name="Seno S."/>
            <person name="Sessa L."/>
            <person name="Sheng Y."/>
            <person name="Shibata Y."/>
            <person name="Shimada H."/>
            <person name="Shimada K."/>
            <person name="Silva D."/>
            <person name="Sinclair B."/>
            <person name="Sperling S."/>
            <person name="Stupka E."/>
            <person name="Sugiura K."/>
            <person name="Sultana R."/>
            <person name="Takenaka Y."/>
            <person name="Taki K."/>
            <person name="Tammoja K."/>
            <person name="Tan S.L."/>
            <person name="Tang S."/>
            <person name="Taylor M.S."/>
            <person name="Tegner J."/>
            <person name="Teichmann S.A."/>
            <person name="Ueda H.R."/>
            <person name="van Nimwegen E."/>
            <person name="Verardo R."/>
            <person name="Wei C.L."/>
            <person name="Yagi K."/>
            <person name="Yamanishi H."/>
            <person name="Zabarovsky E."/>
            <person name="Zhu S."/>
            <person name="Zimmer A."/>
            <person name="Hide W."/>
            <person name="Bult C."/>
            <person name="Grimmond S.M."/>
            <person name="Teasdale R.D."/>
            <person name="Liu E.T."/>
            <person name="Brusic V."/>
            <person name="Quackenbush J."/>
            <person name="Wahlestedt C."/>
            <person name="Mattick J.S."/>
            <person name="Hume D.A."/>
            <person name="Kai C."/>
            <person name="Sasaki D."/>
            <person name="Tomaru Y."/>
            <person name="Fukuda S."/>
            <person name="Kanamori-Katayama M."/>
            <person name="Suzuki M."/>
            <person name="Aoki J."/>
            <person name="Arakawa T."/>
            <person name="Iida J."/>
            <person name="Imamura K."/>
            <person name="Itoh M."/>
            <person name="Kato T."/>
            <person name="Kawaji H."/>
            <person name="Kawagashira N."/>
            <person name="Kawashima T."/>
            <person name="Kojima M."/>
            <person name="Kondo S."/>
            <person name="Konno H."/>
            <person name="Nakano K."/>
            <person name="Ninomiya N."/>
            <person name="Nishio T."/>
            <person name="Okada M."/>
            <person name="Plessy C."/>
            <person name="Shibata K."/>
            <person name="Shiraki T."/>
            <person name="Suzuki S."/>
            <person name="Tagami M."/>
            <person name="Waki K."/>
            <person name="Watahiki A."/>
            <person name="Okamura-Oho Y."/>
            <person name="Suzuki H."/>
            <person name="Kawai J."/>
            <person name="Hayashizaki Y."/>
        </authorList>
    </citation>
    <scope>NUCLEOTIDE SEQUENCE [LARGE SCALE MRNA]</scope>
    <source>
        <strain>C57BL/6J</strain>
        <tissue>Stomach</tissue>
        <tissue>Testis</tissue>
    </source>
</reference>
<reference key="3">
    <citation type="journal article" date="2004" name="Genome Res.">
        <title>The status, quality, and expansion of the NIH full-length cDNA project: the Mammalian Gene Collection (MGC).</title>
        <authorList>
            <consortium name="The MGC Project Team"/>
        </authorList>
    </citation>
    <scope>NUCLEOTIDE SEQUENCE [LARGE SCALE MRNA]</scope>
    <source>
        <strain>C57BL/6J</strain>
        <tissue>Mammary gland</tissue>
    </source>
</reference>
<reference key="4">
    <citation type="submission" date="2009-01" db="UniProtKB">
        <authorList>
            <person name="Lubec G."/>
            <person name="Sunyer B."/>
            <person name="Chen W.-Q."/>
        </authorList>
    </citation>
    <scope>PROTEIN SEQUENCE OF 83-92</scope>
    <scope>IDENTIFICATION BY MASS SPECTROMETRY</scope>
    <source>
        <strain>OF1</strain>
        <tissue>Hippocampus</tissue>
    </source>
</reference>
<reference key="5">
    <citation type="journal article" date="2010" name="Cell">
        <title>A tissue-specific atlas of mouse protein phosphorylation and expression.</title>
        <authorList>
            <person name="Huttlin E.L."/>
            <person name="Jedrychowski M.P."/>
            <person name="Elias J.E."/>
            <person name="Goswami T."/>
            <person name="Rad R."/>
            <person name="Beausoleil S.A."/>
            <person name="Villen J."/>
            <person name="Haas W."/>
            <person name="Sowa M.E."/>
            <person name="Gygi S.P."/>
        </authorList>
    </citation>
    <scope>IDENTIFICATION BY MASS SPECTROMETRY [LARGE SCALE ANALYSIS]</scope>
    <source>
        <tissue>Brown adipose tissue</tissue>
        <tissue>Heart</tissue>
        <tissue>Kidney</tissue>
        <tissue>Liver</tissue>
        <tissue>Spleen</tissue>
        <tissue>Testis</tissue>
    </source>
</reference>